<keyword id="KW-1185">Reference proteome</keyword>
<keyword id="KW-0687">Ribonucleoprotein</keyword>
<keyword id="KW-0689">Ribosomal protein</keyword>
<keyword id="KW-0694">RNA-binding</keyword>
<keyword id="KW-0699">rRNA-binding</keyword>
<reference key="1">
    <citation type="journal article" date="2004" name="Mol. Plant Microbe Interact.">
        <title>The genome sequence of the Gram-positive sugarcane pathogen Leifsonia xyli subsp. xyli.</title>
        <authorList>
            <person name="Monteiro-Vitorello C.B."/>
            <person name="Camargo L.E.A."/>
            <person name="Van Sluys M.A."/>
            <person name="Kitajima J.P."/>
            <person name="Truffi D."/>
            <person name="do Amaral A.M."/>
            <person name="Harakava R."/>
            <person name="de Oliveira J.C.F."/>
            <person name="Wood D."/>
            <person name="de Oliveira M.C."/>
            <person name="Miyaki C.Y."/>
            <person name="Takita M.A."/>
            <person name="da Silva A.C.R."/>
            <person name="Furlan L.R."/>
            <person name="Carraro D.M."/>
            <person name="Camarotte G."/>
            <person name="Almeida N.F. Jr."/>
            <person name="Carrer H."/>
            <person name="Coutinho L.L."/>
            <person name="El-Dorry H.A."/>
            <person name="Ferro M.I.T."/>
            <person name="Gagliardi P.R."/>
            <person name="Giglioti E."/>
            <person name="Goldman M.H.S."/>
            <person name="Goldman G.H."/>
            <person name="Kimura E.T."/>
            <person name="Ferro E.S."/>
            <person name="Kuramae E.E."/>
            <person name="Lemos E.G.M."/>
            <person name="Lemos M.V.F."/>
            <person name="Mauro S.M.Z."/>
            <person name="Machado M.A."/>
            <person name="Marino C.L."/>
            <person name="Menck C.F."/>
            <person name="Nunes L.R."/>
            <person name="Oliveira R.C."/>
            <person name="Pereira G.G."/>
            <person name="Siqueira W."/>
            <person name="de Souza A.A."/>
            <person name="Tsai S.M."/>
            <person name="Zanca A.S."/>
            <person name="Simpson A.J.G."/>
            <person name="Brumbley S.M."/>
            <person name="Setubal J.C."/>
        </authorList>
    </citation>
    <scope>NUCLEOTIDE SEQUENCE [LARGE SCALE GENOMIC DNA]</scope>
    <source>
        <strain>CTCB07</strain>
    </source>
</reference>
<organism>
    <name type="scientific">Leifsonia xyli subsp. xyli (strain CTCB07)</name>
    <dbReference type="NCBI Taxonomy" id="281090"/>
    <lineage>
        <taxon>Bacteria</taxon>
        <taxon>Bacillati</taxon>
        <taxon>Actinomycetota</taxon>
        <taxon>Actinomycetes</taxon>
        <taxon>Micrococcales</taxon>
        <taxon>Microbacteriaceae</taxon>
        <taxon>Leifsonia</taxon>
    </lineage>
</organism>
<evidence type="ECO:0000255" key="1">
    <source>
        <dbReference type="HAMAP-Rule" id="MF_01363"/>
    </source>
</evidence>
<evidence type="ECO:0000305" key="2"/>
<protein>
    <recommendedName>
        <fullName evidence="1">Large ribosomal subunit protein bL21</fullName>
    </recommendedName>
    <alternativeName>
        <fullName evidence="2">50S ribosomal protein L21</fullName>
    </alternativeName>
</protein>
<accession>Q6AFY3</accession>
<name>RL21_LEIXX</name>
<comment type="function">
    <text evidence="1">This protein binds to 23S rRNA in the presence of protein L20.</text>
</comment>
<comment type="subunit">
    <text evidence="1">Part of the 50S ribosomal subunit. Contacts protein L20.</text>
</comment>
<comment type="similarity">
    <text evidence="1">Belongs to the bacterial ribosomal protein bL21 family.</text>
</comment>
<comment type="sequence caution" evidence="2">
    <conflict type="erroneous initiation">
        <sequence resource="EMBL-CDS" id="AAT88712"/>
    </conflict>
</comment>
<dbReference type="EMBL" id="AE016822">
    <property type="protein sequence ID" value="AAT88712.1"/>
    <property type="status" value="ALT_INIT"/>
    <property type="molecule type" value="Genomic_DNA"/>
</dbReference>
<dbReference type="RefSeq" id="WP_011185710.1">
    <property type="nucleotide sequence ID" value="NC_006087.1"/>
</dbReference>
<dbReference type="SMR" id="Q6AFY3"/>
<dbReference type="STRING" id="281090.Lxx08040"/>
<dbReference type="KEGG" id="lxx:Lxx08040"/>
<dbReference type="eggNOG" id="COG0261">
    <property type="taxonomic scope" value="Bacteria"/>
</dbReference>
<dbReference type="HOGENOM" id="CLU_061463_3_0_11"/>
<dbReference type="Proteomes" id="UP000001306">
    <property type="component" value="Chromosome"/>
</dbReference>
<dbReference type="GO" id="GO:0005737">
    <property type="term" value="C:cytoplasm"/>
    <property type="evidence" value="ECO:0007669"/>
    <property type="project" value="UniProtKB-ARBA"/>
</dbReference>
<dbReference type="GO" id="GO:1990904">
    <property type="term" value="C:ribonucleoprotein complex"/>
    <property type="evidence" value="ECO:0007669"/>
    <property type="project" value="UniProtKB-KW"/>
</dbReference>
<dbReference type="GO" id="GO:0005840">
    <property type="term" value="C:ribosome"/>
    <property type="evidence" value="ECO:0007669"/>
    <property type="project" value="UniProtKB-KW"/>
</dbReference>
<dbReference type="GO" id="GO:0019843">
    <property type="term" value="F:rRNA binding"/>
    <property type="evidence" value="ECO:0007669"/>
    <property type="project" value="UniProtKB-UniRule"/>
</dbReference>
<dbReference type="GO" id="GO:0003735">
    <property type="term" value="F:structural constituent of ribosome"/>
    <property type="evidence" value="ECO:0007669"/>
    <property type="project" value="InterPro"/>
</dbReference>
<dbReference type="GO" id="GO:0006412">
    <property type="term" value="P:translation"/>
    <property type="evidence" value="ECO:0007669"/>
    <property type="project" value="UniProtKB-UniRule"/>
</dbReference>
<dbReference type="HAMAP" id="MF_01363">
    <property type="entry name" value="Ribosomal_bL21"/>
    <property type="match status" value="1"/>
</dbReference>
<dbReference type="InterPro" id="IPR028909">
    <property type="entry name" value="bL21-like"/>
</dbReference>
<dbReference type="InterPro" id="IPR036164">
    <property type="entry name" value="bL21-like_sf"/>
</dbReference>
<dbReference type="InterPro" id="IPR001787">
    <property type="entry name" value="Ribosomal_bL21"/>
</dbReference>
<dbReference type="InterPro" id="IPR018258">
    <property type="entry name" value="Ribosomal_bL21_CS"/>
</dbReference>
<dbReference type="NCBIfam" id="TIGR00061">
    <property type="entry name" value="L21"/>
    <property type="match status" value="1"/>
</dbReference>
<dbReference type="PANTHER" id="PTHR21349">
    <property type="entry name" value="50S RIBOSOMAL PROTEIN L21"/>
    <property type="match status" value="1"/>
</dbReference>
<dbReference type="PANTHER" id="PTHR21349:SF0">
    <property type="entry name" value="LARGE RIBOSOMAL SUBUNIT PROTEIN BL21M"/>
    <property type="match status" value="1"/>
</dbReference>
<dbReference type="Pfam" id="PF00829">
    <property type="entry name" value="Ribosomal_L21p"/>
    <property type="match status" value="1"/>
</dbReference>
<dbReference type="SUPFAM" id="SSF141091">
    <property type="entry name" value="L21p-like"/>
    <property type="match status" value="1"/>
</dbReference>
<dbReference type="PROSITE" id="PS01169">
    <property type="entry name" value="RIBOSOMAL_L21"/>
    <property type="match status" value="1"/>
</dbReference>
<sequence>MVYAVVRAGGRQEKVEVGTIVTMDRVKDGENGTIELAAVLLVDGDKITSDAKSLSKVTVTATVLEDLRGPKIVIQKFKNKTGYKKRQGHRQELTRVKIIGIK</sequence>
<gene>
    <name evidence="1" type="primary">rplU</name>
    <name type="ordered locus">Lxx08040</name>
</gene>
<feature type="chain" id="PRO_0000270680" description="Large ribosomal subunit protein bL21">
    <location>
        <begin position="1"/>
        <end position="102"/>
    </location>
</feature>
<proteinExistence type="inferred from homology"/>